<sequence>MASEAPPFWWDEPDWRALALAPAAWIYGRVSGRRLIRAVPPRVSLPVLCVGNFTVGGAGKTPTAIAFARGAIARGMKPGIVSRGYGGNYSGLHLVDPGHDGARHVGDEPLLLARHAAVALSPDRVKAAEYLKSLGCDFIIMDDGFQSARLHADFSLLVVDASRGIGNGRVIPAGPLRAPLTDQMRKTDALLCIGKGNGADFVIRQAARAGRPIYHAQLRPSSSATVAGRRWLAFAGIGNPDKFYESVRQAGGEVVETHSFADHYSFEPDDIRGLVDMARRQGLGLITTAKDHVRLATMPGVPPEFLSKLAVLDVDLEFDRTDALGHILDTVVERFKSRLHG</sequence>
<gene>
    <name evidence="1" type="primary">lpxK</name>
    <name type="ordered locus">BMEA_B0216</name>
</gene>
<dbReference type="EC" id="2.7.1.130" evidence="1"/>
<dbReference type="EMBL" id="CP001489">
    <property type="protein sequence ID" value="ACO02087.1"/>
    <property type="molecule type" value="Genomic_DNA"/>
</dbReference>
<dbReference type="RefSeq" id="WP_004686162.1">
    <property type="nucleotide sequence ID" value="NC_012442.1"/>
</dbReference>
<dbReference type="SMR" id="C0RKF4"/>
<dbReference type="KEGG" id="bmi:BMEA_B0216"/>
<dbReference type="HOGENOM" id="CLU_038816_0_0_5"/>
<dbReference type="UniPathway" id="UPA00359">
    <property type="reaction ID" value="UER00482"/>
</dbReference>
<dbReference type="Proteomes" id="UP000001748">
    <property type="component" value="Chromosome II"/>
</dbReference>
<dbReference type="GO" id="GO:0005886">
    <property type="term" value="C:plasma membrane"/>
    <property type="evidence" value="ECO:0007669"/>
    <property type="project" value="TreeGrafter"/>
</dbReference>
<dbReference type="GO" id="GO:0005524">
    <property type="term" value="F:ATP binding"/>
    <property type="evidence" value="ECO:0007669"/>
    <property type="project" value="UniProtKB-UniRule"/>
</dbReference>
<dbReference type="GO" id="GO:0009029">
    <property type="term" value="F:tetraacyldisaccharide 4'-kinase activity"/>
    <property type="evidence" value="ECO:0007669"/>
    <property type="project" value="UniProtKB-UniRule"/>
</dbReference>
<dbReference type="GO" id="GO:0009245">
    <property type="term" value="P:lipid A biosynthetic process"/>
    <property type="evidence" value="ECO:0007669"/>
    <property type="project" value="UniProtKB-UniRule"/>
</dbReference>
<dbReference type="GO" id="GO:0009244">
    <property type="term" value="P:lipopolysaccharide core region biosynthetic process"/>
    <property type="evidence" value="ECO:0007669"/>
    <property type="project" value="TreeGrafter"/>
</dbReference>
<dbReference type="HAMAP" id="MF_00409">
    <property type="entry name" value="LpxK"/>
    <property type="match status" value="1"/>
</dbReference>
<dbReference type="InterPro" id="IPR003758">
    <property type="entry name" value="LpxK"/>
</dbReference>
<dbReference type="InterPro" id="IPR027417">
    <property type="entry name" value="P-loop_NTPase"/>
</dbReference>
<dbReference type="NCBIfam" id="TIGR00682">
    <property type="entry name" value="lpxK"/>
    <property type="match status" value="1"/>
</dbReference>
<dbReference type="PANTHER" id="PTHR42724">
    <property type="entry name" value="TETRAACYLDISACCHARIDE 4'-KINASE"/>
    <property type="match status" value="1"/>
</dbReference>
<dbReference type="PANTHER" id="PTHR42724:SF1">
    <property type="entry name" value="TETRAACYLDISACCHARIDE 4'-KINASE, MITOCHONDRIAL-RELATED"/>
    <property type="match status" value="1"/>
</dbReference>
<dbReference type="Pfam" id="PF02606">
    <property type="entry name" value="LpxK"/>
    <property type="match status" value="1"/>
</dbReference>
<dbReference type="SUPFAM" id="SSF52540">
    <property type="entry name" value="P-loop containing nucleoside triphosphate hydrolases"/>
    <property type="match status" value="1"/>
</dbReference>
<reference key="1">
    <citation type="submission" date="2009-03" db="EMBL/GenBank/DDBJ databases">
        <title>Brucella melitensis ATCC 23457 whole genome shotgun sequencing project.</title>
        <authorList>
            <person name="Setubal J.C."/>
            <person name="Boyle S."/>
            <person name="Crasta O.R."/>
            <person name="Gillespie J.J."/>
            <person name="Kenyon R.W."/>
            <person name="Lu J."/>
            <person name="Mane S."/>
            <person name="Nagrani S."/>
            <person name="Shallom J.M."/>
            <person name="Shallom S."/>
            <person name="Shukla M."/>
            <person name="Snyder E.E."/>
            <person name="Sobral B.W."/>
            <person name="Wattam A.R."/>
            <person name="Will R."/>
            <person name="Williams K."/>
            <person name="Yoo H."/>
            <person name="Munk C."/>
            <person name="Tapia R."/>
            <person name="Han C."/>
            <person name="Detter J.C."/>
            <person name="Bruce D."/>
            <person name="Brettin T.S."/>
        </authorList>
    </citation>
    <scope>NUCLEOTIDE SEQUENCE [LARGE SCALE GENOMIC DNA]</scope>
    <source>
        <strain>ATCC 23457</strain>
    </source>
</reference>
<keyword id="KW-0067">ATP-binding</keyword>
<keyword id="KW-0418">Kinase</keyword>
<keyword id="KW-0441">Lipid A biosynthesis</keyword>
<keyword id="KW-0444">Lipid biosynthesis</keyword>
<keyword id="KW-0443">Lipid metabolism</keyword>
<keyword id="KW-0547">Nucleotide-binding</keyword>
<keyword id="KW-0808">Transferase</keyword>
<proteinExistence type="inferred from homology"/>
<comment type="function">
    <text evidence="1">Transfers the gamma-phosphate of ATP to the 4'-position of a tetraacyldisaccharide 1-phosphate intermediate (termed DS-1-P) to form tetraacyldisaccharide 1,4'-bis-phosphate (lipid IVA).</text>
</comment>
<comment type="catalytic activity">
    <reaction evidence="1">
        <text>a lipid A disaccharide + ATP = a lipid IVA + ADP + H(+)</text>
        <dbReference type="Rhea" id="RHEA:67840"/>
        <dbReference type="ChEBI" id="CHEBI:15378"/>
        <dbReference type="ChEBI" id="CHEBI:30616"/>
        <dbReference type="ChEBI" id="CHEBI:176343"/>
        <dbReference type="ChEBI" id="CHEBI:176425"/>
        <dbReference type="ChEBI" id="CHEBI:456216"/>
        <dbReference type="EC" id="2.7.1.130"/>
    </reaction>
</comment>
<comment type="pathway">
    <text evidence="1">Glycolipid biosynthesis; lipid IV(A) biosynthesis; lipid IV(A) from (3R)-3-hydroxytetradecanoyl-[acyl-carrier-protein] and UDP-N-acetyl-alpha-D-glucosamine: step 6/6.</text>
</comment>
<comment type="similarity">
    <text evidence="1">Belongs to the LpxK family.</text>
</comment>
<protein>
    <recommendedName>
        <fullName evidence="1">Tetraacyldisaccharide 4'-kinase</fullName>
        <ecNumber evidence="1">2.7.1.130</ecNumber>
    </recommendedName>
    <alternativeName>
        <fullName evidence="1">Lipid A 4'-kinase</fullName>
    </alternativeName>
</protein>
<feature type="chain" id="PRO_1000134735" description="Tetraacyldisaccharide 4'-kinase">
    <location>
        <begin position="1"/>
        <end position="341"/>
    </location>
</feature>
<feature type="binding site" evidence="1">
    <location>
        <begin position="54"/>
        <end position="61"/>
    </location>
    <ligand>
        <name>ATP</name>
        <dbReference type="ChEBI" id="CHEBI:30616"/>
    </ligand>
</feature>
<accession>C0RKF4</accession>
<organism>
    <name type="scientific">Brucella melitensis biotype 2 (strain ATCC 23457)</name>
    <dbReference type="NCBI Taxonomy" id="546272"/>
    <lineage>
        <taxon>Bacteria</taxon>
        <taxon>Pseudomonadati</taxon>
        <taxon>Pseudomonadota</taxon>
        <taxon>Alphaproteobacteria</taxon>
        <taxon>Hyphomicrobiales</taxon>
        <taxon>Brucellaceae</taxon>
        <taxon>Brucella/Ochrobactrum group</taxon>
        <taxon>Brucella</taxon>
    </lineage>
</organism>
<evidence type="ECO:0000255" key="1">
    <source>
        <dbReference type="HAMAP-Rule" id="MF_00409"/>
    </source>
</evidence>
<name>LPXK_BRUMB</name>